<proteinExistence type="evidence at protein level"/>
<organism>
    <name type="scientific">Schizosaccharomyces pombe (strain 972 / ATCC 24843)</name>
    <name type="common">Fission yeast</name>
    <dbReference type="NCBI Taxonomy" id="284812"/>
    <lineage>
        <taxon>Eukaryota</taxon>
        <taxon>Fungi</taxon>
        <taxon>Dikarya</taxon>
        <taxon>Ascomycota</taxon>
        <taxon>Taphrinomycotina</taxon>
        <taxon>Schizosaccharomycetes</taxon>
        <taxon>Schizosaccharomycetales</taxon>
        <taxon>Schizosaccharomycetaceae</taxon>
        <taxon>Schizosaccharomyces</taxon>
    </lineage>
</organism>
<keyword id="KW-0067">ATP-binding</keyword>
<keyword id="KW-0347">Helicase</keyword>
<keyword id="KW-0378">Hydrolase</keyword>
<keyword id="KW-0547">Nucleotide-binding</keyword>
<keyword id="KW-0539">Nucleus</keyword>
<keyword id="KW-0597">Phosphoprotein</keyword>
<keyword id="KW-1185">Reference proteome</keyword>
<keyword id="KW-0690">Ribosome biogenesis</keyword>
<keyword id="KW-0694">RNA-binding</keyword>
<keyword id="KW-0698">rRNA processing</keyword>
<feature type="chain" id="PRO_0000232203" description="ATP-dependent RNA helicase dbp4">
    <location>
        <begin position="1"/>
        <end position="735"/>
    </location>
</feature>
<feature type="domain" description="Helicase ATP-binding" evidence="2">
    <location>
        <begin position="70"/>
        <end position="244"/>
    </location>
</feature>
<feature type="domain" description="Helicase C-terminal" evidence="3">
    <location>
        <begin position="270"/>
        <end position="424"/>
    </location>
</feature>
<feature type="region of interest" description="Disordered" evidence="4">
    <location>
        <begin position="1"/>
        <end position="24"/>
    </location>
</feature>
<feature type="region of interest" description="Disordered" evidence="4">
    <location>
        <begin position="483"/>
        <end position="513"/>
    </location>
</feature>
<feature type="region of interest" description="Disordered" evidence="4">
    <location>
        <begin position="652"/>
        <end position="712"/>
    </location>
</feature>
<feature type="short sequence motif" description="Q motif">
    <location>
        <begin position="39"/>
        <end position="67"/>
    </location>
</feature>
<feature type="short sequence motif" description="DEAD box">
    <location>
        <begin position="192"/>
        <end position="195"/>
    </location>
</feature>
<feature type="compositionally biased region" description="Basic and acidic residues" evidence="4">
    <location>
        <begin position="8"/>
        <end position="19"/>
    </location>
</feature>
<feature type="compositionally biased region" description="Basic and acidic residues" evidence="4">
    <location>
        <begin position="692"/>
        <end position="711"/>
    </location>
</feature>
<feature type="binding site" evidence="2">
    <location>
        <begin position="83"/>
        <end position="90"/>
    </location>
    <ligand>
        <name>ATP</name>
        <dbReference type="ChEBI" id="CHEBI:30616"/>
    </ligand>
</feature>
<feature type="modified residue" description="Phosphoserine" evidence="5">
    <location>
        <position position="500"/>
    </location>
</feature>
<feature type="modified residue" description="Phosphoserine" evidence="5">
    <location>
        <position position="503"/>
    </location>
</feature>
<feature type="modified residue" description="Phosphoserine" evidence="5">
    <location>
        <position position="504"/>
    </location>
</feature>
<feature type="modified residue" description="Phosphoserine" evidence="5">
    <location>
        <position position="545"/>
    </location>
</feature>
<reference key="1">
    <citation type="journal article" date="2002" name="Nature">
        <title>The genome sequence of Schizosaccharomyces pombe.</title>
        <authorList>
            <person name="Wood V."/>
            <person name="Gwilliam R."/>
            <person name="Rajandream M.A."/>
            <person name="Lyne M.H."/>
            <person name="Lyne R."/>
            <person name="Stewart A."/>
            <person name="Sgouros J.G."/>
            <person name="Peat N."/>
            <person name="Hayles J."/>
            <person name="Baker S.G."/>
            <person name="Basham D."/>
            <person name="Bowman S."/>
            <person name="Brooks K."/>
            <person name="Brown D."/>
            <person name="Brown S."/>
            <person name="Chillingworth T."/>
            <person name="Churcher C.M."/>
            <person name="Collins M."/>
            <person name="Connor R."/>
            <person name="Cronin A."/>
            <person name="Davis P."/>
            <person name="Feltwell T."/>
            <person name="Fraser A."/>
            <person name="Gentles S."/>
            <person name="Goble A."/>
            <person name="Hamlin N."/>
            <person name="Harris D.E."/>
            <person name="Hidalgo J."/>
            <person name="Hodgson G."/>
            <person name="Holroyd S."/>
            <person name="Hornsby T."/>
            <person name="Howarth S."/>
            <person name="Huckle E.J."/>
            <person name="Hunt S."/>
            <person name="Jagels K."/>
            <person name="James K.D."/>
            <person name="Jones L."/>
            <person name="Jones M."/>
            <person name="Leather S."/>
            <person name="McDonald S."/>
            <person name="McLean J."/>
            <person name="Mooney P."/>
            <person name="Moule S."/>
            <person name="Mungall K.L."/>
            <person name="Murphy L.D."/>
            <person name="Niblett D."/>
            <person name="Odell C."/>
            <person name="Oliver K."/>
            <person name="O'Neil S."/>
            <person name="Pearson D."/>
            <person name="Quail M.A."/>
            <person name="Rabbinowitsch E."/>
            <person name="Rutherford K.M."/>
            <person name="Rutter S."/>
            <person name="Saunders D."/>
            <person name="Seeger K."/>
            <person name="Sharp S."/>
            <person name="Skelton J."/>
            <person name="Simmonds M.N."/>
            <person name="Squares R."/>
            <person name="Squares S."/>
            <person name="Stevens K."/>
            <person name="Taylor K."/>
            <person name="Taylor R.G."/>
            <person name="Tivey A."/>
            <person name="Walsh S.V."/>
            <person name="Warren T."/>
            <person name="Whitehead S."/>
            <person name="Woodward J.R."/>
            <person name="Volckaert G."/>
            <person name="Aert R."/>
            <person name="Robben J."/>
            <person name="Grymonprez B."/>
            <person name="Weltjens I."/>
            <person name="Vanstreels E."/>
            <person name="Rieger M."/>
            <person name="Schaefer M."/>
            <person name="Mueller-Auer S."/>
            <person name="Gabel C."/>
            <person name="Fuchs M."/>
            <person name="Duesterhoeft A."/>
            <person name="Fritzc C."/>
            <person name="Holzer E."/>
            <person name="Moestl D."/>
            <person name="Hilbert H."/>
            <person name="Borzym K."/>
            <person name="Langer I."/>
            <person name="Beck A."/>
            <person name="Lehrach H."/>
            <person name="Reinhardt R."/>
            <person name="Pohl T.M."/>
            <person name="Eger P."/>
            <person name="Zimmermann W."/>
            <person name="Wedler H."/>
            <person name="Wambutt R."/>
            <person name="Purnelle B."/>
            <person name="Goffeau A."/>
            <person name="Cadieu E."/>
            <person name="Dreano S."/>
            <person name="Gloux S."/>
            <person name="Lelaure V."/>
            <person name="Mottier S."/>
            <person name="Galibert F."/>
            <person name="Aves S.J."/>
            <person name="Xiang Z."/>
            <person name="Hunt C."/>
            <person name="Moore K."/>
            <person name="Hurst S.M."/>
            <person name="Lucas M."/>
            <person name="Rochet M."/>
            <person name="Gaillardin C."/>
            <person name="Tallada V.A."/>
            <person name="Garzon A."/>
            <person name="Thode G."/>
            <person name="Daga R.R."/>
            <person name="Cruzado L."/>
            <person name="Jimenez J."/>
            <person name="Sanchez M."/>
            <person name="del Rey F."/>
            <person name="Benito J."/>
            <person name="Dominguez A."/>
            <person name="Revuelta J.L."/>
            <person name="Moreno S."/>
            <person name="Armstrong J."/>
            <person name="Forsburg S.L."/>
            <person name="Cerutti L."/>
            <person name="Lowe T."/>
            <person name="McCombie W.R."/>
            <person name="Paulsen I."/>
            <person name="Potashkin J."/>
            <person name="Shpakovski G.V."/>
            <person name="Ussery D."/>
            <person name="Barrell B.G."/>
            <person name="Nurse P."/>
        </authorList>
    </citation>
    <scope>NUCLEOTIDE SEQUENCE [LARGE SCALE GENOMIC DNA]</scope>
    <source>
        <strain>972 / ATCC 24843</strain>
    </source>
</reference>
<reference key="2">
    <citation type="journal article" date="2008" name="J. Proteome Res.">
        <title>Phosphoproteome analysis of fission yeast.</title>
        <authorList>
            <person name="Wilson-Grady J.T."/>
            <person name="Villen J."/>
            <person name="Gygi S.P."/>
        </authorList>
    </citation>
    <scope>PHOSPHORYLATION [LARGE SCALE ANALYSIS] AT SER-500; SER-503; SER-504 AND SER-545</scope>
    <scope>IDENTIFICATION BY MASS SPECTROMETRY</scope>
</reference>
<accession>Q9UTP9</accession>
<dbReference type="EC" id="3.6.4.13"/>
<dbReference type="EMBL" id="CU329670">
    <property type="protein sequence ID" value="CAB60250.1"/>
    <property type="molecule type" value="Genomic_DNA"/>
</dbReference>
<dbReference type="PIR" id="T50068">
    <property type="entry name" value="T50068"/>
</dbReference>
<dbReference type="SMR" id="Q9UTP9"/>
<dbReference type="BioGRID" id="278126">
    <property type="interactions" value="2"/>
</dbReference>
<dbReference type="FunCoup" id="Q9UTP9">
    <property type="interactions" value="1008"/>
</dbReference>
<dbReference type="STRING" id="284812.Q9UTP9"/>
<dbReference type="iPTMnet" id="Q9UTP9"/>
<dbReference type="PaxDb" id="4896-SPAC1093.05.1"/>
<dbReference type="EnsemblFungi" id="SPAC1093.05.1">
    <property type="protein sequence ID" value="SPAC1093.05.1:pep"/>
    <property type="gene ID" value="SPAC1093.05"/>
</dbReference>
<dbReference type="KEGG" id="spo:2541630"/>
<dbReference type="PomBase" id="SPAC1093.05"/>
<dbReference type="VEuPathDB" id="FungiDB:SPAC1093.05"/>
<dbReference type="eggNOG" id="KOG0343">
    <property type="taxonomic scope" value="Eukaryota"/>
</dbReference>
<dbReference type="HOGENOM" id="CLU_003041_26_1_1"/>
<dbReference type="InParanoid" id="Q9UTP9"/>
<dbReference type="OMA" id="YDKMFER"/>
<dbReference type="PhylomeDB" id="Q9UTP9"/>
<dbReference type="PRO" id="PR:Q9UTP9"/>
<dbReference type="Proteomes" id="UP000002485">
    <property type="component" value="Chromosome I"/>
</dbReference>
<dbReference type="GO" id="GO:0005737">
    <property type="term" value="C:cytoplasm"/>
    <property type="evidence" value="ECO:0007005"/>
    <property type="project" value="PomBase"/>
</dbReference>
<dbReference type="GO" id="GO:0005829">
    <property type="term" value="C:cytosol"/>
    <property type="evidence" value="ECO:0007005"/>
    <property type="project" value="PomBase"/>
</dbReference>
<dbReference type="GO" id="GO:0005730">
    <property type="term" value="C:nucleolus"/>
    <property type="evidence" value="ECO:0000266"/>
    <property type="project" value="PomBase"/>
</dbReference>
<dbReference type="GO" id="GO:0005634">
    <property type="term" value="C:nucleus"/>
    <property type="evidence" value="ECO:0007005"/>
    <property type="project" value="PomBase"/>
</dbReference>
<dbReference type="GO" id="GO:0032040">
    <property type="term" value="C:small-subunit processome"/>
    <property type="evidence" value="ECO:0000266"/>
    <property type="project" value="PomBase"/>
</dbReference>
<dbReference type="GO" id="GO:0005524">
    <property type="term" value="F:ATP binding"/>
    <property type="evidence" value="ECO:0007669"/>
    <property type="project" value="UniProtKB-KW"/>
</dbReference>
<dbReference type="GO" id="GO:0016887">
    <property type="term" value="F:ATP hydrolysis activity"/>
    <property type="evidence" value="ECO:0007669"/>
    <property type="project" value="RHEA"/>
</dbReference>
<dbReference type="GO" id="GO:0003723">
    <property type="term" value="F:RNA binding"/>
    <property type="evidence" value="ECO:0007669"/>
    <property type="project" value="UniProtKB-KW"/>
</dbReference>
<dbReference type="GO" id="GO:0003724">
    <property type="term" value="F:RNA helicase activity"/>
    <property type="evidence" value="ECO:0000266"/>
    <property type="project" value="PomBase"/>
</dbReference>
<dbReference type="GO" id="GO:0006364">
    <property type="term" value="P:rRNA processing"/>
    <property type="evidence" value="ECO:0000318"/>
    <property type="project" value="GO_Central"/>
</dbReference>
<dbReference type="CDD" id="cd17941">
    <property type="entry name" value="DEADc_DDX10"/>
    <property type="match status" value="1"/>
</dbReference>
<dbReference type="CDD" id="cd18787">
    <property type="entry name" value="SF2_C_DEAD"/>
    <property type="match status" value="1"/>
</dbReference>
<dbReference type="FunFam" id="3.40.50.300:FF:001632">
    <property type="entry name" value="RNA helicase"/>
    <property type="match status" value="1"/>
</dbReference>
<dbReference type="Gene3D" id="3.40.50.300">
    <property type="entry name" value="P-loop containing nucleotide triphosphate hydrolases"/>
    <property type="match status" value="2"/>
</dbReference>
<dbReference type="InterPro" id="IPR011545">
    <property type="entry name" value="DEAD/DEAH_box_helicase_dom"/>
</dbReference>
<dbReference type="InterPro" id="IPR014001">
    <property type="entry name" value="Helicase_ATP-bd"/>
</dbReference>
<dbReference type="InterPro" id="IPR001650">
    <property type="entry name" value="Helicase_C-like"/>
</dbReference>
<dbReference type="InterPro" id="IPR027417">
    <property type="entry name" value="P-loop_NTPase"/>
</dbReference>
<dbReference type="InterPro" id="IPR000629">
    <property type="entry name" value="RNA-helicase_DEAD-box_CS"/>
</dbReference>
<dbReference type="InterPro" id="IPR014014">
    <property type="entry name" value="RNA_helicase_DEAD_Q_motif"/>
</dbReference>
<dbReference type="InterPro" id="IPR025313">
    <property type="entry name" value="SPB4-like_CTE"/>
</dbReference>
<dbReference type="PANTHER" id="PTHR24031">
    <property type="entry name" value="RNA HELICASE"/>
    <property type="match status" value="1"/>
</dbReference>
<dbReference type="Pfam" id="PF13959">
    <property type="entry name" value="CTE_SPB4"/>
    <property type="match status" value="1"/>
</dbReference>
<dbReference type="Pfam" id="PF00270">
    <property type="entry name" value="DEAD"/>
    <property type="match status" value="1"/>
</dbReference>
<dbReference type="Pfam" id="PF00271">
    <property type="entry name" value="Helicase_C"/>
    <property type="match status" value="1"/>
</dbReference>
<dbReference type="SMART" id="SM00487">
    <property type="entry name" value="DEXDc"/>
    <property type="match status" value="1"/>
</dbReference>
<dbReference type="SMART" id="SM01178">
    <property type="entry name" value="DUF4217"/>
    <property type="match status" value="1"/>
</dbReference>
<dbReference type="SMART" id="SM00490">
    <property type="entry name" value="HELICc"/>
    <property type="match status" value="1"/>
</dbReference>
<dbReference type="SUPFAM" id="SSF52540">
    <property type="entry name" value="P-loop containing nucleoside triphosphate hydrolases"/>
    <property type="match status" value="1"/>
</dbReference>
<dbReference type="PROSITE" id="PS00039">
    <property type="entry name" value="DEAD_ATP_HELICASE"/>
    <property type="match status" value="1"/>
</dbReference>
<dbReference type="PROSITE" id="PS51192">
    <property type="entry name" value="HELICASE_ATP_BIND_1"/>
    <property type="match status" value="1"/>
</dbReference>
<dbReference type="PROSITE" id="PS51194">
    <property type="entry name" value="HELICASE_CTER"/>
    <property type="match status" value="1"/>
</dbReference>
<dbReference type="PROSITE" id="PS51195">
    <property type="entry name" value="Q_MOTIF"/>
    <property type="match status" value="1"/>
</dbReference>
<protein>
    <recommendedName>
        <fullName>ATP-dependent RNA helicase dbp4</fullName>
        <ecNumber>3.6.4.13</ecNumber>
    </recommendedName>
</protein>
<name>DBP4_SCHPO</name>
<gene>
    <name type="primary">dbp4</name>
    <name type="ORF">SPAC1093.05</name>
</gene>
<sequence length="735" mass="83671">MPKNRTGRSREAREKKRKEEEEEIEELNSQIEALSETVDHFAELPLTQPTKSALKNAHFITLTEIQKQCIPSALKGRDILGAAKTGSGKTLAFIVPLIENLYRKKWTSLDGLGALVISPTRELAIQTFETLVKIGRLHSFSAGLIIGGNNYKEEKERLSRMNILVCTPGRLLQHIDQAVNFDTSGLQMLILDEADRILDMGFRTTLDAIVSSLPVHRQTMLFSATQTKSVKDLARLSLQNPDFISVHENDTSSTPSNLNQFYLTVPLTEKLDILFGFIRTHLKFKTIVFLSSCKQVRFVYETFRRMRPGISLLHLHGKQKQTTRTEVTAKFTSSRHVVLFCTDIVARGLDFPAVDWVIQLDAPEDVDTYIHRVGRTARYNRSGNALLLLLPSEEAFLKRLESKKIAVERINVKDGKKTSIRNQLQNLCFKDNDIKYIGQKAFISYLRSIYLQKDKDVFQLDKLPVEAFADSLGLPGTPKITFGKLKNHSQSQKDYNSSTSLDSSEESEVDVENKQNVRTKYDRIFERKNQDVLAAHRQRLVEVNSDEDDGDFLQVKRVDHDLPEETGERFNANSKRKEKMASSKKAMLKYKKSADKVYFDDEGNAIPFYAMNTEDTFQKAGDPAALIASHLAEERKALEKADITDKETVRQKQLEKKRRRQELERITQQDATPDEYVPEGPIVAFVDDELPETSKKQKKWFEDNDERDHGGIVEVENLNSLEDQEALALKLMGAA</sequence>
<evidence type="ECO:0000250" key="1"/>
<evidence type="ECO:0000255" key="2">
    <source>
        <dbReference type="PROSITE-ProRule" id="PRU00541"/>
    </source>
</evidence>
<evidence type="ECO:0000255" key="3">
    <source>
        <dbReference type="PROSITE-ProRule" id="PRU00542"/>
    </source>
</evidence>
<evidence type="ECO:0000256" key="4">
    <source>
        <dbReference type="SAM" id="MobiDB-lite"/>
    </source>
</evidence>
<evidence type="ECO:0000269" key="5">
    <source>
    </source>
</evidence>
<evidence type="ECO:0000305" key="6"/>
<comment type="function">
    <text evidence="1">ATP-dependent RNA helicase required for ribosome biogenesis. Involved in the release of U14 snoRNA in pre-ribosomal complexes. Required for pre-rRNA cleavage at site A2 (By similarity).</text>
</comment>
<comment type="catalytic activity">
    <reaction>
        <text>ATP + H2O = ADP + phosphate + H(+)</text>
        <dbReference type="Rhea" id="RHEA:13065"/>
        <dbReference type="ChEBI" id="CHEBI:15377"/>
        <dbReference type="ChEBI" id="CHEBI:15378"/>
        <dbReference type="ChEBI" id="CHEBI:30616"/>
        <dbReference type="ChEBI" id="CHEBI:43474"/>
        <dbReference type="ChEBI" id="CHEBI:456216"/>
        <dbReference type="EC" id="3.6.4.13"/>
    </reaction>
</comment>
<comment type="subunit">
    <text evidence="1">Interacts with the U3 and U14 snoRNAs. Associates with pre-ribosomal complexes (By similarity).</text>
</comment>
<comment type="subcellular location">
    <subcellularLocation>
        <location evidence="1">Nucleus</location>
        <location evidence="1">Nucleolus</location>
    </subcellularLocation>
</comment>
<comment type="domain">
    <text>The Q motif is unique to and characteristic of the DEAD box family of RNA helicases and controls ATP binding and hydrolysis.</text>
</comment>
<comment type="similarity">
    <text evidence="6">Belongs to the DEAD box helicase family. DDX10/DBP4 subfamily.</text>
</comment>